<name>AROA_SHIFL</name>
<proteinExistence type="inferred from homology"/>
<organism>
    <name type="scientific">Shigella flexneri</name>
    <dbReference type="NCBI Taxonomy" id="623"/>
    <lineage>
        <taxon>Bacteria</taxon>
        <taxon>Pseudomonadati</taxon>
        <taxon>Pseudomonadota</taxon>
        <taxon>Gammaproteobacteria</taxon>
        <taxon>Enterobacterales</taxon>
        <taxon>Enterobacteriaceae</taxon>
        <taxon>Shigella</taxon>
    </lineage>
</organism>
<sequence length="427" mass="46168">MESLTLQPIARVDGTINLPGSKSVSNRALLLAALAHGKTVLTNLLDSDDVRHMLNALTALGLSYTLSADRTRCEIIGNGGPLHAEGALELFLGNAGTAMRPLAAALCLDSNDIVLTGEPRMKERPIGHLVDALRLGGAKITYLEQENYPPLRLQGGFTGGNVDVDGSVSSQFLTALLMTAPLAPEDTVIRIKGDLVSKPYIDITLNLMKTFGVEIENQHYQQFVVKGGQSYQSPGTYLVEGDASSASYFLAAAAIKGGTVKVTGIGRNSMQGDIRFADVLEKMGATICWGDDYISCTRGELNAIDMDMNHIPDAAMTIATAALFAKGTTTLRNIYNWRVKETDRLFAMATELRKVGAEVEEGHDYIRITPPEKLNFAEIATYNDHRMAMCFSLVALSDTPVTILDPKCTAKTFPDYFEQLARISQAA</sequence>
<gene>
    <name evidence="1" type="primary">aroA</name>
    <name type="ordered locus">SF0903</name>
    <name type="ordered locus">S0967</name>
</gene>
<reference key="1">
    <citation type="journal article" date="2002" name="Nucleic Acids Res.">
        <title>Genome sequence of Shigella flexneri 2a: insights into pathogenicity through comparison with genomes of Escherichia coli K12 and O157.</title>
        <authorList>
            <person name="Jin Q."/>
            <person name="Yuan Z."/>
            <person name="Xu J."/>
            <person name="Wang Y."/>
            <person name="Shen Y."/>
            <person name="Lu W."/>
            <person name="Wang J."/>
            <person name="Liu H."/>
            <person name="Yang J."/>
            <person name="Yang F."/>
            <person name="Zhang X."/>
            <person name="Zhang J."/>
            <person name="Yang G."/>
            <person name="Wu H."/>
            <person name="Qu D."/>
            <person name="Dong J."/>
            <person name="Sun L."/>
            <person name="Xue Y."/>
            <person name="Zhao A."/>
            <person name="Gao Y."/>
            <person name="Zhu J."/>
            <person name="Kan B."/>
            <person name="Ding K."/>
            <person name="Chen S."/>
            <person name="Cheng H."/>
            <person name="Yao Z."/>
            <person name="He B."/>
            <person name="Chen R."/>
            <person name="Ma D."/>
            <person name="Qiang B."/>
            <person name="Wen Y."/>
            <person name="Hou Y."/>
            <person name="Yu J."/>
        </authorList>
    </citation>
    <scope>NUCLEOTIDE SEQUENCE [LARGE SCALE GENOMIC DNA]</scope>
    <source>
        <strain>301 / Serotype 2a</strain>
    </source>
</reference>
<reference key="2">
    <citation type="journal article" date="2003" name="Infect. Immun.">
        <title>Complete genome sequence and comparative genomics of Shigella flexneri serotype 2a strain 2457T.</title>
        <authorList>
            <person name="Wei J."/>
            <person name="Goldberg M.B."/>
            <person name="Burland V."/>
            <person name="Venkatesan M.M."/>
            <person name="Deng W."/>
            <person name="Fournier G."/>
            <person name="Mayhew G.F."/>
            <person name="Plunkett G. III"/>
            <person name="Rose D.J."/>
            <person name="Darling A."/>
            <person name="Mau B."/>
            <person name="Perna N.T."/>
            <person name="Payne S.M."/>
            <person name="Runyen-Janecky L.J."/>
            <person name="Zhou S."/>
            <person name="Schwartz D.C."/>
            <person name="Blattner F.R."/>
        </authorList>
    </citation>
    <scope>NUCLEOTIDE SEQUENCE [LARGE SCALE GENOMIC DNA]</scope>
    <source>
        <strain>ATCC 700930 / 2457T / Serotype 2a</strain>
    </source>
</reference>
<keyword id="KW-0028">Amino-acid biosynthesis</keyword>
<keyword id="KW-0057">Aromatic amino acid biosynthesis</keyword>
<keyword id="KW-0963">Cytoplasm</keyword>
<keyword id="KW-1185">Reference proteome</keyword>
<keyword id="KW-0808">Transferase</keyword>
<evidence type="ECO:0000255" key="1">
    <source>
        <dbReference type="HAMAP-Rule" id="MF_00210"/>
    </source>
</evidence>
<feature type="chain" id="PRO_1000012481" description="3-phosphoshikimate 1-carboxyvinyltransferase">
    <location>
        <begin position="1"/>
        <end position="427"/>
    </location>
</feature>
<feature type="active site" description="Proton acceptor" evidence="1">
    <location>
        <position position="313"/>
    </location>
</feature>
<feature type="binding site" evidence="1">
    <location>
        <position position="22"/>
    </location>
    <ligand>
        <name>3-phosphoshikimate</name>
        <dbReference type="ChEBI" id="CHEBI:145989"/>
    </ligand>
</feature>
<feature type="binding site" evidence="1">
    <location>
        <position position="22"/>
    </location>
    <ligand>
        <name>phosphoenolpyruvate</name>
        <dbReference type="ChEBI" id="CHEBI:58702"/>
    </ligand>
</feature>
<feature type="binding site" evidence="1">
    <location>
        <position position="23"/>
    </location>
    <ligand>
        <name>3-phosphoshikimate</name>
        <dbReference type="ChEBI" id="CHEBI:145989"/>
    </ligand>
</feature>
<feature type="binding site" evidence="1">
    <location>
        <position position="27"/>
    </location>
    <ligand>
        <name>3-phosphoshikimate</name>
        <dbReference type="ChEBI" id="CHEBI:145989"/>
    </ligand>
</feature>
<feature type="binding site" evidence="1">
    <location>
        <position position="96"/>
    </location>
    <ligand>
        <name>phosphoenolpyruvate</name>
        <dbReference type="ChEBI" id="CHEBI:58702"/>
    </ligand>
</feature>
<feature type="binding site" evidence="1">
    <location>
        <position position="124"/>
    </location>
    <ligand>
        <name>phosphoenolpyruvate</name>
        <dbReference type="ChEBI" id="CHEBI:58702"/>
    </ligand>
</feature>
<feature type="binding site" evidence="1">
    <location>
        <position position="169"/>
    </location>
    <ligand>
        <name>3-phosphoshikimate</name>
        <dbReference type="ChEBI" id="CHEBI:145989"/>
    </ligand>
</feature>
<feature type="binding site" evidence="1">
    <location>
        <position position="170"/>
    </location>
    <ligand>
        <name>3-phosphoshikimate</name>
        <dbReference type="ChEBI" id="CHEBI:145989"/>
    </ligand>
</feature>
<feature type="binding site" evidence="1">
    <location>
        <position position="171"/>
    </location>
    <ligand>
        <name>3-phosphoshikimate</name>
        <dbReference type="ChEBI" id="CHEBI:145989"/>
    </ligand>
</feature>
<feature type="binding site" evidence="1">
    <location>
        <position position="171"/>
    </location>
    <ligand>
        <name>phosphoenolpyruvate</name>
        <dbReference type="ChEBI" id="CHEBI:58702"/>
    </ligand>
</feature>
<feature type="binding site" evidence="1">
    <location>
        <position position="197"/>
    </location>
    <ligand>
        <name>3-phosphoshikimate</name>
        <dbReference type="ChEBI" id="CHEBI:145989"/>
    </ligand>
</feature>
<feature type="binding site" evidence="1">
    <location>
        <position position="313"/>
    </location>
    <ligand>
        <name>3-phosphoshikimate</name>
        <dbReference type="ChEBI" id="CHEBI:145989"/>
    </ligand>
</feature>
<feature type="binding site" evidence="1">
    <location>
        <position position="336"/>
    </location>
    <ligand>
        <name>3-phosphoshikimate</name>
        <dbReference type="ChEBI" id="CHEBI:145989"/>
    </ligand>
</feature>
<feature type="binding site" evidence="1">
    <location>
        <position position="340"/>
    </location>
    <ligand>
        <name>3-phosphoshikimate</name>
        <dbReference type="ChEBI" id="CHEBI:145989"/>
    </ligand>
</feature>
<feature type="binding site" evidence="1">
    <location>
        <position position="344"/>
    </location>
    <ligand>
        <name>phosphoenolpyruvate</name>
        <dbReference type="ChEBI" id="CHEBI:58702"/>
    </ligand>
</feature>
<feature type="binding site" evidence="1">
    <location>
        <position position="386"/>
    </location>
    <ligand>
        <name>phosphoenolpyruvate</name>
        <dbReference type="ChEBI" id="CHEBI:58702"/>
    </ligand>
</feature>
<feature type="binding site" evidence="1">
    <location>
        <position position="411"/>
    </location>
    <ligand>
        <name>phosphoenolpyruvate</name>
        <dbReference type="ChEBI" id="CHEBI:58702"/>
    </ligand>
</feature>
<accession>Q83RY8</accession>
<accession>Q7C293</accession>
<protein>
    <recommendedName>
        <fullName evidence="1">3-phosphoshikimate 1-carboxyvinyltransferase</fullName>
        <ecNumber evidence="1">2.5.1.19</ecNumber>
    </recommendedName>
    <alternativeName>
        <fullName evidence="1">5-enolpyruvylshikimate-3-phosphate synthase</fullName>
        <shortName evidence="1">EPSP synthase</shortName>
        <shortName evidence="1">EPSPS</shortName>
    </alternativeName>
</protein>
<comment type="function">
    <text evidence="1">Catalyzes the transfer of the enolpyruvyl moiety of phosphoenolpyruvate (PEP) to the 5-hydroxyl of shikimate-3-phosphate (S3P) to produce enolpyruvyl shikimate-3-phosphate and inorganic phosphate.</text>
</comment>
<comment type="catalytic activity">
    <reaction evidence="1">
        <text>3-phosphoshikimate + phosphoenolpyruvate = 5-O-(1-carboxyvinyl)-3-phosphoshikimate + phosphate</text>
        <dbReference type="Rhea" id="RHEA:21256"/>
        <dbReference type="ChEBI" id="CHEBI:43474"/>
        <dbReference type="ChEBI" id="CHEBI:57701"/>
        <dbReference type="ChEBI" id="CHEBI:58702"/>
        <dbReference type="ChEBI" id="CHEBI:145989"/>
        <dbReference type="EC" id="2.5.1.19"/>
    </reaction>
    <physiologicalReaction direction="left-to-right" evidence="1">
        <dbReference type="Rhea" id="RHEA:21257"/>
    </physiologicalReaction>
</comment>
<comment type="pathway">
    <text evidence="1">Metabolic intermediate biosynthesis; chorismate biosynthesis; chorismate from D-erythrose 4-phosphate and phosphoenolpyruvate: step 6/7.</text>
</comment>
<comment type="subunit">
    <text evidence="1">Monomer.</text>
</comment>
<comment type="subcellular location">
    <subcellularLocation>
        <location evidence="1">Cytoplasm</location>
    </subcellularLocation>
</comment>
<comment type="similarity">
    <text evidence="1">Belongs to the EPSP synthase family.</text>
</comment>
<dbReference type="EC" id="2.5.1.19" evidence="1"/>
<dbReference type="EMBL" id="AE005674">
    <property type="protein sequence ID" value="AAN42533.1"/>
    <property type="molecule type" value="Genomic_DNA"/>
</dbReference>
<dbReference type="EMBL" id="AE014073">
    <property type="protein sequence ID" value="AAP16419.1"/>
    <property type="molecule type" value="Genomic_DNA"/>
</dbReference>
<dbReference type="RefSeq" id="NP_706826.1">
    <property type="nucleotide sequence ID" value="NC_004337.2"/>
</dbReference>
<dbReference type="RefSeq" id="WP_000445222.1">
    <property type="nucleotide sequence ID" value="NZ_WPGW01000196.1"/>
</dbReference>
<dbReference type="SMR" id="Q83RY8"/>
<dbReference type="STRING" id="198214.SF0903"/>
<dbReference type="PaxDb" id="198214-SF0903"/>
<dbReference type="GeneID" id="1023875"/>
<dbReference type="KEGG" id="sfl:SF0903"/>
<dbReference type="KEGG" id="sfx:S0967"/>
<dbReference type="PATRIC" id="fig|198214.7.peg.1052"/>
<dbReference type="HOGENOM" id="CLU_024321_0_0_6"/>
<dbReference type="UniPathway" id="UPA00053">
    <property type="reaction ID" value="UER00089"/>
</dbReference>
<dbReference type="Proteomes" id="UP000001006">
    <property type="component" value="Chromosome"/>
</dbReference>
<dbReference type="Proteomes" id="UP000002673">
    <property type="component" value="Chromosome"/>
</dbReference>
<dbReference type="GO" id="GO:0005737">
    <property type="term" value="C:cytoplasm"/>
    <property type="evidence" value="ECO:0007669"/>
    <property type="project" value="UniProtKB-SubCell"/>
</dbReference>
<dbReference type="GO" id="GO:0003866">
    <property type="term" value="F:3-phosphoshikimate 1-carboxyvinyltransferase activity"/>
    <property type="evidence" value="ECO:0007669"/>
    <property type="project" value="UniProtKB-UniRule"/>
</dbReference>
<dbReference type="GO" id="GO:0008652">
    <property type="term" value="P:amino acid biosynthetic process"/>
    <property type="evidence" value="ECO:0007669"/>
    <property type="project" value="UniProtKB-KW"/>
</dbReference>
<dbReference type="GO" id="GO:0009073">
    <property type="term" value="P:aromatic amino acid family biosynthetic process"/>
    <property type="evidence" value="ECO:0007669"/>
    <property type="project" value="UniProtKB-KW"/>
</dbReference>
<dbReference type="GO" id="GO:0009423">
    <property type="term" value="P:chorismate biosynthetic process"/>
    <property type="evidence" value="ECO:0007669"/>
    <property type="project" value="UniProtKB-UniRule"/>
</dbReference>
<dbReference type="CDD" id="cd01554">
    <property type="entry name" value="EPT-like"/>
    <property type="match status" value="1"/>
</dbReference>
<dbReference type="FunFam" id="3.65.10.10:FF:000003">
    <property type="entry name" value="3-phosphoshikimate 1-carboxyvinyltransferase"/>
    <property type="match status" value="1"/>
</dbReference>
<dbReference type="FunFam" id="3.65.10.10:FF:000004">
    <property type="entry name" value="3-phosphoshikimate 1-carboxyvinyltransferase"/>
    <property type="match status" value="1"/>
</dbReference>
<dbReference type="Gene3D" id="3.65.10.10">
    <property type="entry name" value="Enolpyruvate transferase domain"/>
    <property type="match status" value="2"/>
</dbReference>
<dbReference type="HAMAP" id="MF_00210">
    <property type="entry name" value="EPSP_synth"/>
    <property type="match status" value="1"/>
</dbReference>
<dbReference type="InterPro" id="IPR001986">
    <property type="entry name" value="Enolpyruvate_Tfrase_dom"/>
</dbReference>
<dbReference type="InterPro" id="IPR036968">
    <property type="entry name" value="Enolpyruvate_Tfrase_sf"/>
</dbReference>
<dbReference type="InterPro" id="IPR006264">
    <property type="entry name" value="EPSP_synthase"/>
</dbReference>
<dbReference type="InterPro" id="IPR023193">
    <property type="entry name" value="EPSP_synthase_CS"/>
</dbReference>
<dbReference type="InterPro" id="IPR013792">
    <property type="entry name" value="RNA3'P_cycl/enolpyr_Trfase_a/b"/>
</dbReference>
<dbReference type="NCBIfam" id="TIGR01356">
    <property type="entry name" value="aroA"/>
    <property type="match status" value="1"/>
</dbReference>
<dbReference type="PANTHER" id="PTHR21090">
    <property type="entry name" value="AROM/DEHYDROQUINATE SYNTHASE"/>
    <property type="match status" value="1"/>
</dbReference>
<dbReference type="PANTHER" id="PTHR21090:SF5">
    <property type="entry name" value="PENTAFUNCTIONAL AROM POLYPEPTIDE"/>
    <property type="match status" value="1"/>
</dbReference>
<dbReference type="Pfam" id="PF00275">
    <property type="entry name" value="EPSP_synthase"/>
    <property type="match status" value="1"/>
</dbReference>
<dbReference type="PIRSF" id="PIRSF000505">
    <property type="entry name" value="EPSPS"/>
    <property type="match status" value="1"/>
</dbReference>
<dbReference type="SUPFAM" id="SSF55205">
    <property type="entry name" value="EPT/RTPC-like"/>
    <property type="match status" value="1"/>
</dbReference>
<dbReference type="PROSITE" id="PS00104">
    <property type="entry name" value="EPSP_SYNTHASE_1"/>
    <property type="match status" value="1"/>
</dbReference>
<dbReference type="PROSITE" id="PS00885">
    <property type="entry name" value="EPSP_SYNTHASE_2"/>
    <property type="match status" value="1"/>
</dbReference>